<feature type="chain" id="PRO_0000171839" description="Putative membrane protein insertion efficiency factor">
    <location>
        <begin position="1"/>
        <end position="88"/>
    </location>
</feature>
<feature type="region of interest" description="Disordered" evidence="2">
    <location>
        <begin position="68"/>
        <end position="88"/>
    </location>
</feature>
<feature type="compositionally biased region" description="Basic and acidic residues" evidence="2">
    <location>
        <begin position="69"/>
        <end position="82"/>
    </location>
</feature>
<proteinExistence type="inferred from homology"/>
<dbReference type="EMBL" id="AL591980">
    <property type="protein sequence ID" value="CAC99748.1"/>
    <property type="molecule type" value="Genomic_DNA"/>
</dbReference>
<dbReference type="PIR" id="AF1283">
    <property type="entry name" value="AF1283"/>
</dbReference>
<dbReference type="RefSeq" id="NP_465195.1">
    <property type="nucleotide sequence ID" value="NC_003210.1"/>
</dbReference>
<dbReference type="STRING" id="169963.gene:17594327"/>
<dbReference type="PaxDb" id="169963-lmo1670"/>
<dbReference type="EnsemblBacteria" id="CAC99748">
    <property type="protein sequence ID" value="CAC99748"/>
    <property type="gene ID" value="CAC99748"/>
</dbReference>
<dbReference type="GeneID" id="985658"/>
<dbReference type="KEGG" id="lmo:lmo1670"/>
<dbReference type="PATRIC" id="fig|169963.11.peg.1713"/>
<dbReference type="eggNOG" id="COG0759">
    <property type="taxonomic scope" value="Bacteria"/>
</dbReference>
<dbReference type="HOGENOM" id="CLU_144811_6_0_9"/>
<dbReference type="OrthoDB" id="9801753at2"/>
<dbReference type="PhylomeDB" id="Q8Y6L4"/>
<dbReference type="BioCyc" id="LMON169963:LMO1670-MONOMER"/>
<dbReference type="Proteomes" id="UP000000817">
    <property type="component" value="Chromosome"/>
</dbReference>
<dbReference type="GO" id="GO:0005886">
    <property type="term" value="C:plasma membrane"/>
    <property type="evidence" value="ECO:0007669"/>
    <property type="project" value="UniProtKB-SubCell"/>
</dbReference>
<dbReference type="HAMAP" id="MF_00386">
    <property type="entry name" value="UPF0161_YidD"/>
    <property type="match status" value="1"/>
</dbReference>
<dbReference type="InterPro" id="IPR002696">
    <property type="entry name" value="Membr_insert_effic_factor_YidD"/>
</dbReference>
<dbReference type="NCBIfam" id="TIGR00278">
    <property type="entry name" value="membrane protein insertion efficiency factor YidD"/>
    <property type="match status" value="1"/>
</dbReference>
<dbReference type="PANTHER" id="PTHR33383">
    <property type="entry name" value="MEMBRANE PROTEIN INSERTION EFFICIENCY FACTOR-RELATED"/>
    <property type="match status" value="1"/>
</dbReference>
<dbReference type="PANTHER" id="PTHR33383:SF1">
    <property type="entry name" value="MEMBRANE PROTEIN INSERTION EFFICIENCY FACTOR-RELATED"/>
    <property type="match status" value="1"/>
</dbReference>
<dbReference type="Pfam" id="PF01809">
    <property type="entry name" value="YidD"/>
    <property type="match status" value="1"/>
</dbReference>
<dbReference type="SMART" id="SM01234">
    <property type="entry name" value="Haemolytic"/>
    <property type="match status" value="1"/>
</dbReference>
<organism>
    <name type="scientific">Listeria monocytogenes serovar 1/2a (strain ATCC BAA-679 / EGD-e)</name>
    <dbReference type="NCBI Taxonomy" id="169963"/>
    <lineage>
        <taxon>Bacteria</taxon>
        <taxon>Bacillati</taxon>
        <taxon>Bacillota</taxon>
        <taxon>Bacilli</taxon>
        <taxon>Bacillales</taxon>
        <taxon>Listeriaceae</taxon>
        <taxon>Listeria</taxon>
    </lineage>
</organism>
<accession>Q8Y6L4</accession>
<evidence type="ECO:0000255" key="1">
    <source>
        <dbReference type="HAMAP-Rule" id="MF_00386"/>
    </source>
</evidence>
<evidence type="ECO:0000256" key="2">
    <source>
        <dbReference type="SAM" id="MobiDB-lite"/>
    </source>
</evidence>
<reference key="1">
    <citation type="journal article" date="2001" name="Science">
        <title>Comparative genomics of Listeria species.</title>
        <authorList>
            <person name="Glaser P."/>
            <person name="Frangeul L."/>
            <person name="Buchrieser C."/>
            <person name="Rusniok C."/>
            <person name="Amend A."/>
            <person name="Baquero F."/>
            <person name="Berche P."/>
            <person name="Bloecker H."/>
            <person name="Brandt P."/>
            <person name="Chakraborty T."/>
            <person name="Charbit A."/>
            <person name="Chetouani F."/>
            <person name="Couve E."/>
            <person name="de Daruvar A."/>
            <person name="Dehoux P."/>
            <person name="Domann E."/>
            <person name="Dominguez-Bernal G."/>
            <person name="Duchaud E."/>
            <person name="Durant L."/>
            <person name="Dussurget O."/>
            <person name="Entian K.-D."/>
            <person name="Fsihi H."/>
            <person name="Garcia-del Portillo F."/>
            <person name="Garrido P."/>
            <person name="Gautier L."/>
            <person name="Goebel W."/>
            <person name="Gomez-Lopez N."/>
            <person name="Hain T."/>
            <person name="Hauf J."/>
            <person name="Jackson D."/>
            <person name="Jones L.-M."/>
            <person name="Kaerst U."/>
            <person name="Kreft J."/>
            <person name="Kuhn M."/>
            <person name="Kunst F."/>
            <person name="Kurapkat G."/>
            <person name="Madueno E."/>
            <person name="Maitournam A."/>
            <person name="Mata Vicente J."/>
            <person name="Ng E."/>
            <person name="Nedjari H."/>
            <person name="Nordsiek G."/>
            <person name="Novella S."/>
            <person name="de Pablos B."/>
            <person name="Perez-Diaz J.-C."/>
            <person name="Purcell R."/>
            <person name="Remmel B."/>
            <person name="Rose M."/>
            <person name="Schlueter T."/>
            <person name="Simoes N."/>
            <person name="Tierrez A."/>
            <person name="Vazquez-Boland J.-A."/>
            <person name="Voss H."/>
            <person name="Wehland J."/>
            <person name="Cossart P."/>
        </authorList>
    </citation>
    <scope>NUCLEOTIDE SEQUENCE [LARGE SCALE GENOMIC DNA]</scope>
    <source>
        <strain>ATCC BAA-679 / EGD-e</strain>
    </source>
</reference>
<sequence>MKKILIGGIRLYQKYISRFTPATCRFYPTCSAYGIEAIQTHGALKGSYLAIRRISKCHPFHKGGLDFVPPKKDKNADSEHSCKVHHHH</sequence>
<comment type="function">
    <text evidence="1">Could be involved in insertion of integral membrane proteins into the membrane.</text>
</comment>
<comment type="subcellular location">
    <subcellularLocation>
        <location evidence="1">Cell membrane</location>
        <topology evidence="1">Peripheral membrane protein</topology>
        <orientation evidence="1">Cytoplasmic side</orientation>
    </subcellularLocation>
</comment>
<comment type="similarity">
    <text evidence="1">Belongs to the UPF0161 family.</text>
</comment>
<keyword id="KW-1003">Cell membrane</keyword>
<keyword id="KW-0472">Membrane</keyword>
<keyword id="KW-1185">Reference proteome</keyword>
<name>YIDD_LISMO</name>
<gene>
    <name type="ordered locus">lmo1670</name>
</gene>
<protein>
    <recommendedName>
        <fullName evidence="1">Putative membrane protein insertion efficiency factor</fullName>
    </recommendedName>
</protein>